<protein>
    <recommendedName>
        <fullName evidence="5">Lysine--tRNA ligase cla4</fullName>
        <ecNumber>6.1.1.6</ecNumber>
    </recommendedName>
    <alternativeName>
        <fullName evidence="4">Cladosporin biosynthesis cluster protein 4</fullName>
    </alternativeName>
    <alternativeName>
        <fullName evidence="4">Lysyl-tRNA synthetase</fullName>
        <shortName evidence="5">LysRS</shortName>
    </alternativeName>
</protein>
<keyword id="KW-0030">Aminoacyl-tRNA synthetase</keyword>
<keyword id="KW-0067">ATP-binding</keyword>
<keyword id="KW-0436">Ligase</keyword>
<keyword id="KW-0547">Nucleotide-binding</keyword>
<keyword id="KW-0648">Protein biosynthesis</keyword>
<evidence type="ECO:0000250" key="1">
    <source>
        <dbReference type="UniProtKB" id="P15180"/>
    </source>
</evidence>
<evidence type="ECO:0000256" key="2">
    <source>
        <dbReference type="SAM" id="MobiDB-lite"/>
    </source>
</evidence>
<evidence type="ECO:0000269" key="3">
    <source>
    </source>
</evidence>
<evidence type="ECO:0000303" key="4">
    <source>
    </source>
</evidence>
<evidence type="ECO:0000305" key="5"/>
<dbReference type="EC" id="6.1.1.6"/>
<dbReference type="EMBL" id="KT037693">
    <property type="protein sequence ID" value="AMB51801.1"/>
    <property type="molecule type" value="mRNA"/>
</dbReference>
<dbReference type="SMR" id="A0A120HYZ1"/>
<dbReference type="GO" id="GO:0005829">
    <property type="term" value="C:cytosol"/>
    <property type="evidence" value="ECO:0007669"/>
    <property type="project" value="TreeGrafter"/>
</dbReference>
<dbReference type="GO" id="GO:0005524">
    <property type="term" value="F:ATP binding"/>
    <property type="evidence" value="ECO:0007669"/>
    <property type="project" value="UniProtKB-KW"/>
</dbReference>
<dbReference type="GO" id="GO:0004824">
    <property type="term" value="F:lysine-tRNA ligase activity"/>
    <property type="evidence" value="ECO:0007669"/>
    <property type="project" value="UniProtKB-EC"/>
</dbReference>
<dbReference type="GO" id="GO:0000049">
    <property type="term" value="F:tRNA binding"/>
    <property type="evidence" value="ECO:0007669"/>
    <property type="project" value="TreeGrafter"/>
</dbReference>
<dbReference type="GO" id="GO:0006430">
    <property type="term" value="P:lysyl-tRNA aminoacylation"/>
    <property type="evidence" value="ECO:0007669"/>
    <property type="project" value="InterPro"/>
</dbReference>
<dbReference type="CDD" id="cd00775">
    <property type="entry name" value="LysRS_core"/>
    <property type="match status" value="1"/>
</dbReference>
<dbReference type="CDD" id="cd04322">
    <property type="entry name" value="LysRS_N"/>
    <property type="match status" value="1"/>
</dbReference>
<dbReference type="FunFam" id="2.40.50.140:FF:000050">
    <property type="entry name" value="Lysine--tRNA ligase"/>
    <property type="match status" value="1"/>
</dbReference>
<dbReference type="FunFam" id="3.30.930.10:FF:000044">
    <property type="entry name" value="Lysine--tRNA ligase"/>
    <property type="match status" value="1"/>
</dbReference>
<dbReference type="Gene3D" id="3.30.930.10">
    <property type="entry name" value="Bira Bifunctional Protein, Domain 2"/>
    <property type="match status" value="1"/>
</dbReference>
<dbReference type="Gene3D" id="2.40.50.140">
    <property type="entry name" value="Nucleic acid-binding proteins"/>
    <property type="match status" value="1"/>
</dbReference>
<dbReference type="HAMAP" id="MF_00252">
    <property type="entry name" value="Lys_tRNA_synth_class2"/>
    <property type="match status" value="1"/>
</dbReference>
<dbReference type="InterPro" id="IPR004364">
    <property type="entry name" value="Aa-tRNA-synt_II"/>
</dbReference>
<dbReference type="InterPro" id="IPR006195">
    <property type="entry name" value="aa-tRNA-synth_II"/>
</dbReference>
<dbReference type="InterPro" id="IPR045864">
    <property type="entry name" value="aa-tRNA-synth_II/BPL/LPL"/>
</dbReference>
<dbReference type="InterPro" id="IPR002313">
    <property type="entry name" value="Lys-tRNA-ligase_II"/>
</dbReference>
<dbReference type="InterPro" id="IPR034762">
    <property type="entry name" value="Lys-tRNA-ligase_II_bac/euk"/>
</dbReference>
<dbReference type="InterPro" id="IPR044136">
    <property type="entry name" value="Lys-tRNA-ligase_II_N"/>
</dbReference>
<dbReference type="InterPro" id="IPR018149">
    <property type="entry name" value="Lys-tRNA-synth_II_C"/>
</dbReference>
<dbReference type="InterPro" id="IPR012340">
    <property type="entry name" value="NA-bd_OB-fold"/>
</dbReference>
<dbReference type="InterPro" id="IPR004365">
    <property type="entry name" value="NA-bd_OB_tRNA"/>
</dbReference>
<dbReference type="NCBIfam" id="TIGR00499">
    <property type="entry name" value="lysS_bact"/>
    <property type="match status" value="1"/>
</dbReference>
<dbReference type="NCBIfam" id="NF001756">
    <property type="entry name" value="PRK00484.1"/>
    <property type="match status" value="1"/>
</dbReference>
<dbReference type="PANTHER" id="PTHR42918:SF9">
    <property type="entry name" value="LYSINE--TRNA LIGASE"/>
    <property type="match status" value="1"/>
</dbReference>
<dbReference type="PANTHER" id="PTHR42918">
    <property type="entry name" value="LYSYL-TRNA SYNTHETASE"/>
    <property type="match status" value="1"/>
</dbReference>
<dbReference type="Pfam" id="PF00152">
    <property type="entry name" value="tRNA-synt_2"/>
    <property type="match status" value="1"/>
</dbReference>
<dbReference type="Pfam" id="PF01336">
    <property type="entry name" value="tRNA_anti-codon"/>
    <property type="match status" value="1"/>
</dbReference>
<dbReference type="PIRSF" id="PIRSF039101">
    <property type="entry name" value="LysRS2"/>
    <property type="match status" value="1"/>
</dbReference>
<dbReference type="PRINTS" id="PR00982">
    <property type="entry name" value="TRNASYNTHLYS"/>
</dbReference>
<dbReference type="SUPFAM" id="SSF55681">
    <property type="entry name" value="Class II aaRS and biotin synthetases"/>
    <property type="match status" value="1"/>
</dbReference>
<dbReference type="SUPFAM" id="SSF50249">
    <property type="entry name" value="Nucleic acid-binding proteins"/>
    <property type="match status" value="1"/>
</dbReference>
<dbReference type="PROSITE" id="PS50862">
    <property type="entry name" value="AA_TRNA_LIGASE_II"/>
    <property type="match status" value="1"/>
</dbReference>
<proteinExistence type="evidence at transcript level"/>
<organism>
    <name type="scientific">Cladosporium cladosporioides</name>
    <dbReference type="NCBI Taxonomy" id="29917"/>
    <lineage>
        <taxon>Eukaryota</taxon>
        <taxon>Fungi</taxon>
        <taxon>Dikarya</taxon>
        <taxon>Ascomycota</taxon>
        <taxon>Pezizomycotina</taxon>
        <taxon>Dothideomycetes</taxon>
        <taxon>Dothideomycetidae</taxon>
        <taxon>Cladosporiales</taxon>
        <taxon>Cladosporiaceae</taxon>
        <taxon>Cladosporium</taxon>
    </lineage>
</organism>
<reference key="1">
    <citation type="journal article" date="2016" name="Angew. Chem. Int. Ed.">
        <title>Production of new cladosporin analogues by reconstitution of the polyketide synthases responsible for the biosynthesis of this antimalarial agent.</title>
        <authorList>
            <person name="Cochrane R.V."/>
            <person name="Sanichar R."/>
            <person name="Lambkin G.R."/>
            <person name="Reiz B."/>
            <person name="Xu W."/>
            <person name="Tang Y."/>
            <person name="Vederas J.C."/>
        </authorList>
    </citation>
    <scope>NUCLEOTIDE SEQUENCE [MRNA]</scope>
    <scope>FUNCTION</scope>
</reference>
<gene>
    <name evidence="4" type="primary">cla4</name>
</gene>
<accession>A0A120HYZ1</accession>
<comment type="function">
    <text evidence="3">Involved in self-resistance to cladosporin since this product is an inhibitor of lysyl-tRNA synthetase. Cla4 may not be inhibited by cladosporin, thereby imparting cladosporin resistance (PubMed:26783060). When cladosporin biosynthesis is switched on, transcription of cla4 will then be necessary for continued protein synthesis in C.cladosporioides (PubMed:26783060).</text>
</comment>
<comment type="catalytic activity">
    <reaction evidence="1">
        <text>tRNA(Lys) + L-lysine + ATP = L-lysyl-tRNA(Lys) + AMP + diphosphate</text>
        <dbReference type="Rhea" id="RHEA:20792"/>
        <dbReference type="Rhea" id="RHEA-COMP:9696"/>
        <dbReference type="Rhea" id="RHEA-COMP:9697"/>
        <dbReference type="ChEBI" id="CHEBI:30616"/>
        <dbReference type="ChEBI" id="CHEBI:32551"/>
        <dbReference type="ChEBI" id="CHEBI:33019"/>
        <dbReference type="ChEBI" id="CHEBI:78442"/>
        <dbReference type="ChEBI" id="CHEBI:78529"/>
        <dbReference type="ChEBI" id="CHEBI:456215"/>
        <dbReference type="EC" id="6.1.1.6"/>
    </reaction>
</comment>
<comment type="subunit">
    <text evidence="1">Homodimer.</text>
</comment>
<comment type="similarity">
    <text evidence="5">Belongs to the class-II aminoacyl-tRNA synthetase family.</text>
</comment>
<name>CLA4_CLACD</name>
<feature type="chain" id="PRO_0000437073" description="Lysine--tRNA ligase cla4">
    <location>
        <begin position="1"/>
        <end position="594"/>
    </location>
</feature>
<feature type="region of interest" description="Disordered" evidence="2">
    <location>
        <begin position="1"/>
        <end position="62"/>
    </location>
</feature>
<feature type="compositionally biased region" description="Basic and acidic residues" evidence="2">
    <location>
        <begin position="18"/>
        <end position="42"/>
    </location>
</feature>
<sequence>MADPGAVKETVLLLDEPTGEKVSKTELKKRLKSRAKEAEKQKKAATAPTKIQKETSSEQDEANLSAHQYFEIRSNRINKLRETKNSYPYPHKFEVTNDLRDFLTVYKNLAKGEERTDVPIRIAGRIYTKRVSGNKLVFYDIRAEGVKVQVMCQAQNSTTGFEEQHEVLRRGDIVGIVGFPGRTSPKTRDNGELSIFATQVVLLSPCLHALPSEHYGFQDKEQRFRQRYLDLIINDRPRQIFRTRAKIVSYLRSYLDSRDFTEVETPMMNAIAGGATASPFVTHHNDLKRDLFMRVAPELYLKMLVVGGLERVYEIGKQFRNEGIDLTHSPEFTTCEFYQAYADYNDLMAMTEDLISSMVKHITGGYETTFESQTGQVYTINWQSPWKRIDMIPALEEACGDKFPPGDQLHTPEAGTFLKEMLKKMKVECTPPLTNARMLDKLVGEFVEDKCINPTFVTGHPQMMSPLAKAHRDTPGICERFEVFVTTKELLNAYTELNDPFDQRMRFEEQANQKAQGDDEAQMVDENFCQALEYGLPPTGGWGMGIDRLTMFLTNNYSIKEVLAFPMMKDDKADGEKKEAIVKTGTAEDGSVQL</sequence>